<name>YWO1_CAEEL</name>
<protein>
    <recommendedName>
        <fullName>Probable G-protein coupled receptor AH9.1</fullName>
    </recommendedName>
</protein>
<reference key="1">
    <citation type="journal article" date="1998" name="Science">
        <title>Genome sequence of the nematode C. elegans: a platform for investigating biology.</title>
        <authorList>
            <consortium name="The C. elegans sequencing consortium"/>
        </authorList>
    </citation>
    <scope>NUCLEOTIDE SEQUENCE [LARGE SCALE GENOMIC DNA]</scope>
    <source>
        <strain>Bristol N2</strain>
    </source>
</reference>
<reference key="2">
    <citation type="journal article" date="2007" name="Mol. Cell. Proteomics">
        <title>Proteomics reveals N-linked glycoprotein diversity in Caenorhabditis elegans and suggests an atypical translocation mechanism for integral membrane proteins.</title>
        <authorList>
            <person name="Kaji H."/>
            <person name="Kamiie J."/>
            <person name="Kawakami H."/>
            <person name="Kido K."/>
            <person name="Yamauchi Y."/>
            <person name="Shinkawa T."/>
            <person name="Taoka M."/>
            <person name="Takahashi N."/>
            <person name="Isobe T."/>
        </authorList>
    </citation>
    <scope>GLYCOSYLATION [LARGE SCALE ANALYSIS] AT ASN-210</scope>
    <scope>IDENTIFICATION BY MASS SPECTROMETRY</scope>
    <source>
        <strain>Bristol N2</strain>
    </source>
</reference>
<dbReference type="EMBL" id="FO080097">
    <property type="protein sequence ID" value="CCD61188.1"/>
    <property type="molecule type" value="Genomic_DNA"/>
</dbReference>
<dbReference type="PIR" id="T30085">
    <property type="entry name" value="T30085"/>
</dbReference>
<dbReference type="RefSeq" id="NP_508414.2">
    <property type="nucleotide sequence ID" value="NM_076013.3"/>
</dbReference>
<dbReference type="SMR" id="Q10904"/>
<dbReference type="FunCoup" id="Q10904">
    <property type="interactions" value="1"/>
</dbReference>
<dbReference type="iPTMnet" id="Q10904"/>
<dbReference type="PaxDb" id="6239-AH9.1"/>
<dbReference type="EnsemblMetazoa" id="AH9.1.1">
    <property type="protein sequence ID" value="AH9.1.1"/>
    <property type="gene ID" value="WBGene00014998"/>
</dbReference>
<dbReference type="GeneID" id="181810"/>
<dbReference type="KEGG" id="cel:CELE_AH9.1"/>
<dbReference type="UCSC" id="AH9.1">
    <property type="organism name" value="c. elegans"/>
</dbReference>
<dbReference type="AGR" id="WB:WBGene00014998"/>
<dbReference type="CTD" id="181810"/>
<dbReference type="WormBase" id="AH9.1">
    <property type="protein sequence ID" value="CE40671"/>
    <property type="gene ID" value="WBGene00014998"/>
</dbReference>
<dbReference type="eggNOG" id="KOG3656">
    <property type="taxonomic scope" value="Eukaryota"/>
</dbReference>
<dbReference type="HOGENOM" id="CLU_050919_0_0_1"/>
<dbReference type="InParanoid" id="Q10904"/>
<dbReference type="OMA" id="CHPIKFF"/>
<dbReference type="OrthoDB" id="10033446at2759"/>
<dbReference type="PhylomeDB" id="Q10904"/>
<dbReference type="PRO" id="PR:Q10904"/>
<dbReference type="Proteomes" id="UP000001940">
    <property type="component" value="Chromosome X"/>
</dbReference>
<dbReference type="Bgee" id="WBGene00014998">
    <property type="expression patterns" value="Expressed in pharyngeal muscle cell (C elegans) and 3 other cell types or tissues"/>
</dbReference>
<dbReference type="GO" id="GO:0005886">
    <property type="term" value="C:plasma membrane"/>
    <property type="evidence" value="ECO:0007669"/>
    <property type="project" value="UniProtKB-SubCell"/>
</dbReference>
<dbReference type="GO" id="GO:0004930">
    <property type="term" value="F:G protein-coupled receptor activity"/>
    <property type="evidence" value="ECO:0007669"/>
    <property type="project" value="UniProtKB-KW"/>
</dbReference>
<dbReference type="CDD" id="cd14978">
    <property type="entry name" value="7tmA_FMRFamide_R-like"/>
    <property type="match status" value="1"/>
</dbReference>
<dbReference type="Gene3D" id="1.20.1070.10">
    <property type="entry name" value="Rhodopsin 7-helix transmembrane proteins"/>
    <property type="match status" value="1"/>
</dbReference>
<dbReference type="InterPro" id="IPR053093">
    <property type="entry name" value="GPCR-like"/>
</dbReference>
<dbReference type="InterPro" id="IPR000276">
    <property type="entry name" value="GPCR_Rhodpsn"/>
</dbReference>
<dbReference type="InterPro" id="IPR017452">
    <property type="entry name" value="GPCR_Rhodpsn_7TM"/>
</dbReference>
<dbReference type="PANTHER" id="PTHR47760:SF3">
    <property type="entry name" value="G-PROTEIN COUPLED RECEPTOR AH9.1-RELATED"/>
    <property type="match status" value="1"/>
</dbReference>
<dbReference type="PANTHER" id="PTHR47760">
    <property type="entry name" value="G-PROTEIN COUPLED RECEPTOR B0563.6-LIKE PROTEIN-RELATED"/>
    <property type="match status" value="1"/>
</dbReference>
<dbReference type="Pfam" id="PF00001">
    <property type="entry name" value="7tm_1"/>
    <property type="match status" value="1"/>
</dbReference>
<dbReference type="PRINTS" id="PR00237">
    <property type="entry name" value="GPCRRHODOPSN"/>
</dbReference>
<dbReference type="SUPFAM" id="SSF81321">
    <property type="entry name" value="Family A G protein-coupled receptor-like"/>
    <property type="match status" value="1"/>
</dbReference>
<dbReference type="PROSITE" id="PS00237">
    <property type="entry name" value="G_PROTEIN_RECEP_F1_1"/>
    <property type="match status" value="1"/>
</dbReference>
<dbReference type="PROSITE" id="PS50262">
    <property type="entry name" value="G_PROTEIN_RECEP_F1_2"/>
    <property type="match status" value="1"/>
</dbReference>
<feature type="chain" id="PRO_0000070235" description="Probable G-protein coupled receptor AH9.1">
    <location>
        <begin position="1"/>
        <end position="411"/>
    </location>
</feature>
<feature type="topological domain" description="Cytoplasmic" evidence="1">
    <location>
        <begin position="1"/>
        <end position="18"/>
    </location>
</feature>
<feature type="transmembrane region" description="Helical" evidence="1">
    <location>
        <begin position="19"/>
        <end position="39"/>
    </location>
</feature>
<feature type="topological domain" description="Extracellular" evidence="1">
    <location>
        <begin position="40"/>
        <end position="55"/>
    </location>
</feature>
<feature type="transmembrane region" description="Helical" evidence="1">
    <location>
        <begin position="56"/>
        <end position="76"/>
    </location>
</feature>
<feature type="topological domain" description="Cytoplasmic" evidence="1">
    <location>
        <begin position="77"/>
        <end position="87"/>
    </location>
</feature>
<feature type="transmembrane region" description="Helical" evidence="1">
    <location>
        <begin position="88"/>
        <end position="108"/>
    </location>
</feature>
<feature type="topological domain" description="Extracellular" evidence="1">
    <location>
        <begin position="109"/>
        <end position="131"/>
    </location>
</feature>
<feature type="transmembrane region" description="Helical" evidence="1">
    <location>
        <begin position="132"/>
        <end position="152"/>
    </location>
</feature>
<feature type="topological domain" description="Cytoplasmic" evidence="1">
    <location>
        <begin position="153"/>
        <end position="176"/>
    </location>
</feature>
<feature type="transmembrane region" description="Helical" evidence="1">
    <location>
        <begin position="177"/>
        <end position="197"/>
    </location>
</feature>
<feature type="topological domain" description="Extracellular" evidence="1">
    <location>
        <begin position="198"/>
        <end position="229"/>
    </location>
</feature>
<feature type="transmembrane region" description="Helical" evidence="1">
    <location>
        <begin position="230"/>
        <end position="250"/>
    </location>
</feature>
<feature type="topological domain" description="Cytoplasmic" evidence="1">
    <location>
        <begin position="251"/>
        <end position="299"/>
    </location>
</feature>
<feature type="transmembrane region" description="Helical" evidence="1">
    <location>
        <begin position="300"/>
        <end position="320"/>
    </location>
</feature>
<feature type="topological domain" description="Extracellular" evidence="1">
    <location>
        <begin position="321"/>
        <end position="333"/>
    </location>
</feature>
<feature type="transmembrane region" description="Helical" evidence="1">
    <location>
        <begin position="334"/>
        <end position="354"/>
    </location>
</feature>
<feature type="topological domain" description="Cytoplasmic" evidence="1">
    <location>
        <begin position="355"/>
        <end position="411"/>
    </location>
</feature>
<feature type="glycosylation site" description="N-linked (GlcNAc...) asparagine" evidence="3">
    <location>
        <position position="210"/>
    </location>
</feature>
<proteinExistence type="evidence at protein level"/>
<accession>Q10904</accession>
<organism>
    <name type="scientific">Caenorhabditis elegans</name>
    <dbReference type="NCBI Taxonomy" id="6239"/>
    <lineage>
        <taxon>Eukaryota</taxon>
        <taxon>Metazoa</taxon>
        <taxon>Ecdysozoa</taxon>
        <taxon>Nematoda</taxon>
        <taxon>Chromadorea</taxon>
        <taxon>Rhabditida</taxon>
        <taxon>Rhabditina</taxon>
        <taxon>Rhabditomorpha</taxon>
        <taxon>Rhabditoidea</taxon>
        <taxon>Rhabditidae</taxon>
        <taxon>Peloderinae</taxon>
        <taxon>Caenorhabditis</taxon>
    </lineage>
</organism>
<sequence>MLLFLLRRIFDCRYKYKLFVKALVLFLTIVYNAGLVHFFFRTTSLDDSPEMNHVDYVAHVIVMPIVLSIGMINQCLNVCTLLHIRTSIFLYLKASAIADILSIVAFIPFLFRHAKLIDPSWELGMFYHAHLELPLINALISASALNIVAMTVDRYVSVCHPIKFFQNNETKPSRRRTMLIIVMIYFIALMIYFPSVFQKKLGVVTDALTNKTIYTIVRNEDVEALQVFKFYLIVRECICRWGPVLLLVILNMCVVRGLRKIDKRNWFWRQPSQNSRTETLAQRQLRSPRDDRSRISVLLFVTSATFIICNIPASVISFFVRRVSGSLFWQIFRAIANLLQVTSYLYNFYLYALCSSEYRHAFLRLFGCRSSLSPTSTGDSPTVRVSVHGKRCHQAVVLLGNENHENPVDEV</sequence>
<comment type="function">
    <text>Not known. Putative receptor.</text>
</comment>
<comment type="subcellular location">
    <subcellularLocation>
        <location evidence="4">Cell membrane</location>
        <topology evidence="4">Multi-pass membrane protein</topology>
    </subcellularLocation>
</comment>
<comment type="similarity">
    <text evidence="2">Belongs to the G-protein coupled receptor 1 family.</text>
</comment>
<keyword id="KW-1003">Cell membrane</keyword>
<keyword id="KW-0297">G-protein coupled receptor</keyword>
<keyword id="KW-0325">Glycoprotein</keyword>
<keyword id="KW-0472">Membrane</keyword>
<keyword id="KW-0675">Receptor</keyword>
<keyword id="KW-1185">Reference proteome</keyword>
<keyword id="KW-0807">Transducer</keyword>
<keyword id="KW-0812">Transmembrane</keyword>
<keyword id="KW-1133">Transmembrane helix</keyword>
<gene>
    <name type="ORF">AH9.1</name>
</gene>
<evidence type="ECO:0000255" key="1"/>
<evidence type="ECO:0000255" key="2">
    <source>
        <dbReference type="PROSITE-ProRule" id="PRU00521"/>
    </source>
</evidence>
<evidence type="ECO:0000269" key="3">
    <source>
    </source>
</evidence>
<evidence type="ECO:0000305" key="4"/>